<evidence type="ECO:0000250" key="1">
    <source>
        <dbReference type="UniProtKB" id="P00410"/>
    </source>
</evidence>
<evidence type="ECO:0000255" key="2"/>
<evidence type="ECO:0000305" key="3"/>
<gene>
    <name type="primary">COII</name>
</gene>
<geneLocation type="mitochondrion"/>
<dbReference type="EC" id="7.1.1.9"/>
<dbReference type="EMBL" id="AF081829">
    <property type="protein sequence ID" value="AAD05519.1"/>
    <property type="molecule type" value="Genomic_DNA"/>
</dbReference>
<dbReference type="PIR" id="T11155">
    <property type="entry name" value="T11155"/>
</dbReference>
<dbReference type="SMR" id="O99819"/>
<dbReference type="KEGG" id="rsan:808373"/>
<dbReference type="CTD" id="4513"/>
<dbReference type="OrthoDB" id="539285at2759"/>
<dbReference type="GO" id="GO:0005743">
    <property type="term" value="C:mitochondrial inner membrane"/>
    <property type="evidence" value="ECO:0007669"/>
    <property type="project" value="UniProtKB-SubCell"/>
</dbReference>
<dbReference type="GO" id="GO:0005507">
    <property type="term" value="F:copper ion binding"/>
    <property type="evidence" value="ECO:0007669"/>
    <property type="project" value="InterPro"/>
</dbReference>
<dbReference type="GO" id="GO:0004129">
    <property type="term" value="F:cytochrome-c oxidase activity"/>
    <property type="evidence" value="ECO:0007669"/>
    <property type="project" value="UniProtKB-EC"/>
</dbReference>
<dbReference type="GO" id="GO:0042773">
    <property type="term" value="P:ATP synthesis coupled electron transport"/>
    <property type="evidence" value="ECO:0007669"/>
    <property type="project" value="TreeGrafter"/>
</dbReference>
<dbReference type="CDD" id="cd13912">
    <property type="entry name" value="CcO_II_C"/>
    <property type="match status" value="1"/>
</dbReference>
<dbReference type="FunFam" id="2.60.40.420:FF:000001">
    <property type="entry name" value="Cytochrome c oxidase subunit 2"/>
    <property type="match status" value="1"/>
</dbReference>
<dbReference type="Gene3D" id="1.10.287.90">
    <property type="match status" value="1"/>
</dbReference>
<dbReference type="Gene3D" id="2.60.40.420">
    <property type="entry name" value="Cupredoxins - blue copper proteins"/>
    <property type="match status" value="1"/>
</dbReference>
<dbReference type="InterPro" id="IPR045187">
    <property type="entry name" value="CcO_II"/>
</dbReference>
<dbReference type="InterPro" id="IPR002429">
    <property type="entry name" value="CcO_II-like_C"/>
</dbReference>
<dbReference type="InterPro" id="IPR034210">
    <property type="entry name" value="CcO_II_C"/>
</dbReference>
<dbReference type="InterPro" id="IPR001505">
    <property type="entry name" value="Copper_CuA"/>
</dbReference>
<dbReference type="InterPro" id="IPR008972">
    <property type="entry name" value="Cupredoxin"/>
</dbReference>
<dbReference type="InterPro" id="IPR014222">
    <property type="entry name" value="Cyt_c_oxidase_su2"/>
</dbReference>
<dbReference type="InterPro" id="IPR011759">
    <property type="entry name" value="Cyt_c_oxidase_su2_TM_dom"/>
</dbReference>
<dbReference type="InterPro" id="IPR036257">
    <property type="entry name" value="Cyt_c_oxidase_su2_TM_sf"/>
</dbReference>
<dbReference type="NCBIfam" id="TIGR02866">
    <property type="entry name" value="CoxB"/>
    <property type="match status" value="1"/>
</dbReference>
<dbReference type="PANTHER" id="PTHR22888:SF9">
    <property type="entry name" value="CYTOCHROME C OXIDASE SUBUNIT 2"/>
    <property type="match status" value="1"/>
</dbReference>
<dbReference type="PANTHER" id="PTHR22888">
    <property type="entry name" value="CYTOCHROME C OXIDASE, SUBUNIT II"/>
    <property type="match status" value="1"/>
</dbReference>
<dbReference type="Pfam" id="PF00116">
    <property type="entry name" value="COX2"/>
    <property type="match status" value="1"/>
</dbReference>
<dbReference type="Pfam" id="PF02790">
    <property type="entry name" value="COX2_TM"/>
    <property type="match status" value="1"/>
</dbReference>
<dbReference type="PRINTS" id="PR01166">
    <property type="entry name" value="CYCOXIDASEII"/>
</dbReference>
<dbReference type="SUPFAM" id="SSF49503">
    <property type="entry name" value="Cupredoxins"/>
    <property type="match status" value="1"/>
</dbReference>
<dbReference type="SUPFAM" id="SSF81464">
    <property type="entry name" value="Cytochrome c oxidase subunit II-like, transmembrane region"/>
    <property type="match status" value="1"/>
</dbReference>
<dbReference type="PROSITE" id="PS00078">
    <property type="entry name" value="COX2"/>
    <property type="match status" value="1"/>
</dbReference>
<dbReference type="PROSITE" id="PS50857">
    <property type="entry name" value="COX2_CUA"/>
    <property type="match status" value="1"/>
</dbReference>
<dbReference type="PROSITE" id="PS50999">
    <property type="entry name" value="COX2_TM"/>
    <property type="match status" value="1"/>
</dbReference>
<protein>
    <recommendedName>
        <fullName>Cytochrome c oxidase subunit 2</fullName>
        <ecNumber>7.1.1.9</ecNumber>
    </recommendedName>
    <alternativeName>
        <fullName>Cytochrome c oxidase polypeptide II</fullName>
    </alternativeName>
</protein>
<accession>O99819</accession>
<proteinExistence type="inferred from homology"/>
<reference key="1">
    <citation type="journal article" date="1998" name="Mol. Biol. Evol.">
        <title>Mitochondrial gene order is not conserved in arthropods: prostriate and metastriate tick mitochondrial genomes.</title>
        <authorList>
            <person name="Black W.C. IV"/>
            <person name="Roehrdanz R.L."/>
        </authorList>
    </citation>
    <scope>NUCLEOTIDE SEQUENCE [GENOMIC DNA]</scope>
</reference>
<organism>
    <name type="scientific">Rhipicephalus sanguineus</name>
    <name type="common">Brown dog tick</name>
    <name type="synonym">Ixodes sanguineus</name>
    <dbReference type="NCBI Taxonomy" id="34632"/>
    <lineage>
        <taxon>Eukaryota</taxon>
        <taxon>Metazoa</taxon>
        <taxon>Ecdysozoa</taxon>
        <taxon>Arthropoda</taxon>
        <taxon>Chelicerata</taxon>
        <taxon>Arachnida</taxon>
        <taxon>Acari</taxon>
        <taxon>Parasitiformes</taxon>
        <taxon>Ixodida</taxon>
        <taxon>Ixodoidea</taxon>
        <taxon>Ixodidae</taxon>
        <taxon>Rhipicephalinae</taxon>
        <taxon>Rhipicephalus</taxon>
        <taxon>Rhipicephalus</taxon>
    </lineage>
</organism>
<sequence length="225" mass="26011">MMTWSQMSFSDMNSPIMEQMVFFHDHSMMIILMITILTIYMITNIMMNNLLSRSMMEGQEIEIIWTIIPAITLIFIAIPSLHLLYLTDETFNSQISIKVLGHQWYWSYEYSDFNKEFDSFMIPEPEMMKNSFRLLDTDNNLVIPINTNIKYLISSMDVIHSWTIPSLGIKMDAVPGRLNQSFSISSRPGLYYGQCSEICGANHSFMPISLGVTSMKNFINFINSS</sequence>
<name>COX2_RHISA</name>
<comment type="function">
    <text evidence="1">Component of the cytochrome c oxidase, the last enzyme in the mitochondrial electron transport chain which drives oxidative phosphorylation. The respiratory chain contains 3 multisubunit complexes succinate dehydrogenase (complex II, CII), ubiquinol-cytochrome c oxidoreductase (cytochrome b-c1 complex, complex III, CIII) and cytochrome c oxidase (complex IV, CIV), that cooperate to transfer electrons derived from NADH and succinate to molecular oxygen, creating an electrochemical gradient over the inner membrane that drives transmembrane transport and the ATP synthase. Cytochrome c oxidase is the component of the respiratory chain that catalyzes the reduction of oxygen to water. Electrons originating from reduced cytochrome c in the intermembrane space (IMS) are transferred via the dinuclear copper A center (CU(A)) of subunit 2 and heme A of subunit 1 to the active site in subunit 1, a binuclear center (BNC) formed by heme A3 and copper B (CU(B)). The BNC reduces molecular oxygen to 2 water molecules using 4 electrons from cytochrome c in the IMS and 4 protons from the mitochondrial matrix.</text>
</comment>
<comment type="catalytic activity">
    <reaction evidence="1">
        <text>4 Fe(II)-[cytochrome c] + O2 + 8 H(+)(in) = 4 Fe(III)-[cytochrome c] + 2 H2O + 4 H(+)(out)</text>
        <dbReference type="Rhea" id="RHEA:11436"/>
        <dbReference type="Rhea" id="RHEA-COMP:10350"/>
        <dbReference type="Rhea" id="RHEA-COMP:14399"/>
        <dbReference type="ChEBI" id="CHEBI:15377"/>
        <dbReference type="ChEBI" id="CHEBI:15378"/>
        <dbReference type="ChEBI" id="CHEBI:15379"/>
        <dbReference type="ChEBI" id="CHEBI:29033"/>
        <dbReference type="ChEBI" id="CHEBI:29034"/>
        <dbReference type="EC" id="7.1.1.9"/>
    </reaction>
    <physiologicalReaction direction="left-to-right" evidence="1">
        <dbReference type="Rhea" id="RHEA:11437"/>
    </physiologicalReaction>
</comment>
<comment type="cofactor">
    <cofactor evidence="1">
        <name>Cu cation</name>
        <dbReference type="ChEBI" id="CHEBI:23378"/>
    </cofactor>
    <text evidence="1">Binds a dinuclear copper A center per subunit.</text>
</comment>
<comment type="subunit">
    <text evidence="1">Component of the cytochrome c oxidase (complex IV, CIV), a multisubunit enzyme composed of a catalytic core of 3 subunits and several supernumerary subunits. The complex exists as a monomer or a dimer and forms supercomplexes (SCs) in the inner mitochondrial membrane with ubiquinol-cytochrome c oxidoreductase (cytochrome b-c1 complex, complex III, CIII).</text>
</comment>
<comment type="subcellular location">
    <subcellularLocation>
        <location evidence="1">Mitochondrion inner membrane</location>
        <topology evidence="1">Multi-pass membrane protein</topology>
    </subcellularLocation>
</comment>
<comment type="similarity">
    <text evidence="3">Belongs to the cytochrome c oxidase subunit 2 family.</text>
</comment>
<keyword id="KW-0186">Copper</keyword>
<keyword id="KW-0249">Electron transport</keyword>
<keyword id="KW-0460">Magnesium</keyword>
<keyword id="KW-0472">Membrane</keyword>
<keyword id="KW-0479">Metal-binding</keyword>
<keyword id="KW-0496">Mitochondrion</keyword>
<keyword id="KW-0999">Mitochondrion inner membrane</keyword>
<keyword id="KW-0679">Respiratory chain</keyword>
<keyword id="KW-1278">Translocase</keyword>
<keyword id="KW-0812">Transmembrane</keyword>
<keyword id="KW-1133">Transmembrane helix</keyword>
<keyword id="KW-0813">Transport</keyword>
<feature type="chain" id="PRO_0000183680" description="Cytochrome c oxidase subunit 2">
    <location>
        <begin position="1"/>
        <end position="225"/>
    </location>
</feature>
<feature type="topological domain" description="Mitochondrial intermembrane" evidence="2">
    <location>
        <begin position="1"/>
        <end position="26"/>
    </location>
</feature>
<feature type="transmembrane region" description="Helical" evidence="2">
    <location>
        <begin position="27"/>
        <end position="48"/>
    </location>
</feature>
<feature type="topological domain" description="Mitochondrial matrix" evidence="2">
    <location>
        <begin position="49"/>
        <end position="62"/>
    </location>
</feature>
<feature type="transmembrane region" description="Helical" evidence="2">
    <location>
        <begin position="63"/>
        <end position="82"/>
    </location>
</feature>
<feature type="topological domain" description="Mitochondrial intermembrane" evidence="2">
    <location>
        <begin position="83"/>
        <end position="225"/>
    </location>
</feature>
<feature type="binding site" evidence="1">
    <location>
        <position position="160"/>
    </location>
    <ligand>
        <name>Cu cation</name>
        <dbReference type="ChEBI" id="CHEBI:23378"/>
        <label>A1</label>
    </ligand>
</feature>
<feature type="binding site" evidence="1">
    <location>
        <position position="195"/>
    </location>
    <ligand>
        <name>Cu cation</name>
        <dbReference type="ChEBI" id="CHEBI:23378"/>
        <label>A1</label>
    </ligand>
</feature>
<feature type="binding site" evidence="1">
    <location>
        <position position="195"/>
    </location>
    <ligand>
        <name>Cu cation</name>
        <dbReference type="ChEBI" id="CHEBI:23378"/>
        <label>A2</label>
    </ligand>
</feature>
<feature type="binding site" evidence="1">
    <location>
        <position position="197"/>
    </location>
    <ligand>
        <name>Cu cation</name>
        <dbReference type="ChEBI" id="CHEBI:23378"/>
        <label>A2</label>
    </ligand>
</feature>
<feature type="binding site" evidence="1">
    <location>
        <position position="197"/>
    </location>
    <ligand>
        <name>Mg(2+)</name>
        <dbReference type="ChEBI" id="CHEBI:18420"/>
        <note>ligand shared with subunit 1</note>
    </ligand>
</feature>
<feature type="binding site" evidence="1">
    <location>
        <position position="199"/>
    </location>
    <ligand>
        <name>Cu cation</name>
        <dbReference type="ChEBI" id="CHEBI:23378"/>
        <label>A1</label>
    </ligand>
</feature>
<feature type="binding site" evidence="1">
    <location>
        <position position="199"/>
    </location>
    <ligand>
        <name>Cu cation</name>
        <dbReference type="ChEBI" id="CHEBI:23378"/>
        <label>A2</label>
    </ligand>
</feature>
<feature type="binding site" evidence="1">
    <location>
        <position position="203"/>
    </location>
    <ligand>
        <name>Cu cation</name>
        <dbReference type="ChEBI" id="CHEBI:23378"/>
        <label>A2</label>
    </ligand>
</feature>
<feature type="binding site" evidence="1">
    <location>
        <position position="206"/>
    </location>
    <ligand>
        <name>Cu cation</name>
        <dbReference type="ChEBI" id="CHEBI:23378"/>
        <label>A1</label>
    </ligand>
</feature>